<dbReference type="EMBL" id="CP000901">
    <property type="protein sequence ID" value="ABX87472.1"/>
    <property type="molecule type" value="Genomic_DNA"/>
</dbReference>
<dbReference type="RefSeq" id="WP_002215546.1">
    <property type="nucleotide sequence ID" value="NZ_CP009935.1"/>
</dbReference>
<dbReference type="SMR" id="A9R5T8"/>
<dbReference type="KEGG" id="ypg:YpAngola_A4201"/>
<dbReference type="PATRIC" id="fig|349746.12.peg.938"/>
<dbReference type="GO" id="GO:0005886">
    <property type="term" value="C:plasma membrane"/>
    <property type="evidence" value="ECO:0007669"/>
    <property type="project" value="UniProtKB-SubCell"/>
</dbReference>
<dbReference type="GO" id="GO:0045259">
    <property type="term" value="C:proton-transporting ATP synthase complex"/>
    <property type="evidence" value="ECO:0007669"/>
    <property type="project" value="UniProtKB-KW"/>
</dbReference>
<dbReference type="GO" id="GO:0005524">
    <property type="term" value="F:ATP binding"/>
    <property type="evidence" value="ECO:0007669"/>
    <property type="project" value="UniProtKB-UniRule"/>
</dbReference>
<dbReference type="GO" id="GO:0046933">
    <property type="term" value="F:proton-transporting ATP synthase activity, rotational mechanism"/>
    <property type="evidence" value="ECO:0007669"/>
    <property type="project" value="UniProtKB-UniRule"/>
</dbReference>
<dbReference type="CDD" id="cd12152">
    <property type="entry name" value="F1-ATPase_delta"/>
    <property type="match status" value="1"/>
</dbReference>
<dbReference type="FunFam" id="1.20.5.440:FF:000001">
    <property type="entry name" value="ATP synthase epsilon chain"/>
    <property type="match status" value="1"/>
</dbReference>
<dbReference type="FunFam" id="2.60.15.10:FF:000001">
    <property type="entry name" value="ATP synthase epsilon chain"/>
    <property type="match status" value="1"/>
</dbReference>
<dbReference type="Gene3D" id="1.20.5.440">
    <property type="entry name" value="ATP synthase delta/epsilon subunit, C-terminal domain"/>
    <property type="match status" value="1"/>
</dbReference>
<dbReference type="Gene3D" id="2.60.15.10">
    <property type="entry name" value="F0F1 ATP synthase delta/epsilon subunit, N-terminal"/>
    <property type="match status" value="1"/>
</dbReference>
<dbReference type="HAMAP" id="MF_00530">
    <property type="entry name" value="ATP_synth_epsil_bac"/>
    <property type="match status" value="1"/>
</dbReference>
<dbReference type="InterPro" id="IPR036794">
    <property type="entry name" value="ATP_F1_dsu/esu_C_sf"/>
</dbReference>
<dbReference type="InterPro" id="IPR001469">
    <property type="entry name" value="ATP_synth_F1_dsu/esu"/>
</dbReference>
<dbReference type="InterPro" id="IPR020546">
    <property type="entry name" value="ATP_synth_F1_dsu/esu_N"/>
</dbReference>
<dbReference type="InterPro" id="IPR020547">
    <property type="entry name" value="ATP_synth_F1_esu_C"/>
</dbReference>
<dbReference type="InterPro" id="IPR036771">
    <property type="entry name" value="ATPsynth_dsu/esu_N"/>
</dbReference>
<dbReference type="NCBIfam" id="TIGR01216">
    <property type="entry name" value="ATP_synt_epsi"/>
    <property type="match status" value="1"/>
</dbReference>
<dbReference type="NCBIfam" id="NF001847">
    <property type="entry name" value="PRK00571.1-4"/>
    <property type="match status" value="1"/>
</dbReference>
<dbReference type="PANTHER" id="PTHR13822">
    <property type="entry name" value="ATP SYNTHASE DELTA/EPSILON CHAIN"/>
    <property type="match status" value="1"/>
</dbReference>
<dbReference type="PANTHER" id="PTHR13822:SF10">
    <property type="entry name" value="ATP SYNTHASE EPSILON CHAIN, CHLOROPLASTIC"/>
    <property type="match status" value="1"/>
</dbReference>
<dbReference type="Pfam" id="PF00401">
    <property type="entry name" value="ATP-synt_DE"/>
    <property type="match status" value="1"/>
</dbReference>
<dbReference type="Pfam" id="PF02823">
    <property type="entry name" value="ATP-synt_DE_N"/>
    <property type="match status" value="1"/>
</dbReference>
<dbReference type="SUPFAM" id="SSF46604">
    <property type="entry name" value="Epsilon subunit of F1F0-ATP synthase C-terminal domain"/>
    <property type="match status" value="1"/>
</dbReference>
<dbReference type="SUPFAM" id="SSF51344">
    <property type="entry name" value="Epsilon subunit of F1F0-ATP synthase N-terminal domain"/>
    <property type="match status" value="1"/>
</dbReference>
<gene>
    <name evidence="1" type="primary">atpC</name>
    <name type="ordered locus">YpAngola_A4201</name>
</gene>
<keyword id="KW-0066">ATP synthesis</keyword>
<keyword id="KW-0997">Cell inner membrane</keyword>
<keyword id="KW-1003">Cell membrane</keyword>
<keyword id="KW-0139">CF(1)</keyword>
<keyword id="KW-0375">Hydrogen ion transport</keyword>
<keyword id="KW-0406">Ion transport</keyword>
<keyword id="KW-0472">Membrane</keyword>
<keyword id="KW-0813">Transport</keyword>
<comment type="function">
    <text evidence="1">Produces ATP from ADP in the presence of a proton gradient across the membrane.</text>
</comment>
<comment type="subunit">
    <text evidence="1">F-type ATPases have 2 components, CF(1) - the catalytic core - and CF(0) - the membrane proton channel. CF(1) has five subunits: alpha(3), beta(3), gamma(1), delta(1), epsilon(1). CF(0) has three main subunits: a, b and c.</text>
</comment>
<comment type="subcellular location">
    <subcellularLocation>
        <location evidence="1">Cell inner membrane</location>
        <topology evidence="1">Peripheral membrane protein</topology>
    </subcellularLocation>
</comment>
<comment type="similarity">
    <text evidence="1">Belongs to the ATPase epsilon chain family.</text>
</comment>
<reference key="1">
    <citation type="journal article" date="2010" name="J. Bacteriol.">
        <title>Genome sequence of the deep-rooted Yersinia pestis strain Angola reveals new insights into the evolution and pangenome of the plague bacterium.</title>
        <authorList>
            <person name="Eppinger M."/>
            <person name="Worsham P.L."/>
            <person name="Nikolich M.P."/>
            <person name="Riley D.R."/>
            <person name="Sebastian Y."/>
            <person name="Mou S."/>
            <person name="Achtman M."/>
            <person name="Lindler L.E."/>
            <person name="Ravel J."/>
        </authorList>
    </citation>
    <scope>NUCLEOTIDE SEQUENCE [LARGE SCALE GENOMIC DNA]</scope>
    <source>
        <strain>Angola</strain>
    </source>
</reference>
<organism>
    <name type="scientific">Yersinia pestis bv. Antiqua (strain Angola)</name>
    <dbReference type="NCBI Taxonomy" id="349746"/>
    <lineage>
        <taxon>Bacteria</taxon>
        <taxon>Pseudomonadati</taxon>
        <taxon>Pseudomonadota</taxon>
        <taxon>Gammaproteobacteria</taxon>
        <taxon>Enterobacterales</taxon>
        <taxon>Yersiniaceae</taxon>
        <taxon>Yersinia</taxon>
    </lineage>
</organism>
<accession>A9R5T8</accession>
<name>ATPE_YERPG</name>
<proteinExistence type="inferred from homology"/>
<evidence type="ECO:0000255" key="1">
    <source>
        <dbReference type="HAMAP-Rule" id="MF_00530"/>
    </source>
</evidence>
<sequence>MAAMTYHLDVVSAEKKMFSGVVQKIQVTGSEGELGIFPGHAPLLTAIKPGMIRIVKQFGEEEFIYLSGGILEVQPSVVIVLADTAIRGLDLDEARALESKRKAEAHINNSHGDVDYAQASAELAKAIAKLRVIELTKKAM</sequence>
<protein>
    <recommendedName>
        <fullName evidence="1">ATP synthase epsilon chain</fullName>
    </recommendedName>
    <alternativeName>
        <fullName evidence="1">ATP synthase F1 sector epsilon subunit</fullName>
    </alternativeName>
    <alternativeName>
        <fullName evidence="1">F-ATPase epsilon subunit</fullName>
    </alternativeName>
</protein>
<feature type="chain" id="PRO_1000127910" description="ATP synthase epsilon chain">
    <location>
        <begin position="1"/>
        <end position="140"/>
    </location>
</feature>